<feature type="chain" id="PRO_0000237502" description="DNA-directed RNA polymerase subunit omega">
    <location>
        <begin position="1"/>
        <end position="91"/>
    </location>
</feature>
<reference key="1">
    <citation type="journal article" date="2005" name="Nucleic Acids Res.">
        <title>The genome sequence of Salmonella enterica serovar Choleraesuis, a highly invasive and resistant zoonotic pathogen.</title>
        <authorList>
            <person name="Chiu C.-H."/>
            <person name="Tang P."/>
            <person name="Chu C."/>
            <person name="Hu S."/>
            <person name="Bao Q."/>
            <person name="Yu J."/>
            <person name="Chou Y.-Y."/>
            <person name="Wang H.-S."/>
            <person name="Lee Y.-S."/>
        </authorList>
    </citation>
    <scope>NUCLEOTIDE SEQUENCE [LARGE SCALE GENOMIC DNA]</scope>
    <source>
        <strain>SC-B67</strain>
    </source>
</reference>
<gene>
    <name evidence="1" type="primary">rpoZ</name>
    <name type="ordered locus">SCH_3665</name>
</gene>
<evidence type="ECO:0000255" key="1">
    <source>
        <dbReference type="HAMAP-Rule" id="MF_00366"/>
    </source>
</evidence>
<protein>
    <recommendedName>
        <fullName evidence="1">DNA-directed RNA polymerase subunit omega</fullName>
        <shortName evidence="1">RNAP omega subunit</shortName>
        <ecNumber evidence="1">2.7.7.6</ecNumber>
    </recommendedName>
    <alternativeName>
        <fullName evidence="1">RNA polymerase omega subunit</fullName>
    </alternativeName>
    <alternativeName>
        <fullName evidence="1">Transcriptase subunit omega</fullName>
    </alternativeName>
</protein>
<keyword id="KW-0240">DNA-directed RNA polymerase</keyword>
<keyword id="KW-0548">Nucleotidyltransferase</keyword>
<keyword id="KW-0804">Transcription</keyword>
<keyword id="KW-0808">Transferase</keyword>
<organism>
    <name type="scientific">Salmonella choleraesuis (strain SC-B67)</name>
    <dbReference type="NCBI Taxonomy" id="321314"/>
    <lineage>
        <taxon>Bacteria</taxon>
        <taxon>Pseudomonadati</taxon>
        <taxon>Pseudomonadota</taxon>
        <taxon>Gammaproteobacteria</taxon>
        <taxon>Enterobacterales</taxon>
        <taxon>Enterobacteriaceae</taxon>
        <taxon>Salmonella</taxon>
    </lineage>
</organism>
<proteinExistence type="inferred from homology"/>
<accession>Q57I91</accession>
<comment type="function">
    <text evidence="1">Promotes RNA polymerase assembly. Latches the N- and C-terminal regions of the beta' subunit thereby facilitating its interaction with the beta and alpha subunits.</text>
</comment>
<comment type="catalytic activity">
    <reaction evidence="1">
        <text>RNA(n) + a ribonucleoside 5'-triphosphate = RNA(n+1) + diphosphate</text>
        <dbReference type="Rhea" id="RHEA:21248"/>
        <dbReference type="Rhea" id="RHEA-COMP:14527"/>
        <dbReference type="Rhea" id="RHEA-COMP:17342"/>
        <dbReference type="ChEBI" id="CHEBI:33019"/>
        <dbReference type="ChEBI" id="CHEBI:61557"/>
        <dbReference type="ChEBI" id="CHEBI:140395"/>
        <dbReference type="EC" id="2.7.7.6"/>
    </reaction>
</comment>
<comment type="subunit">
    <text evidence="1">The RNAP catalytic core consists of 2 alpha, 1 beta, 1 beta' and 1 omega subunit. When a sigma factor is associated with the core the holoenzyme is formed, which can initiate transcription.</text>
</comment>
<comment type="similarity">
    <text evidence="1">Belongs to the RNA polymerase subunit omega family.</text>
</comment>
<dbReference type="EC" id="2.7.7.6" evidence="1"/>
<dbReference type="EMBL" id="AE017220">
    <property type="protein sequence ID" value="AAX67571.1"/>
    <property type="molecule type" value="Genomic_DNA"/>
</dbReference>
<dbReference type="RefSeq" id="WP_000135058.1">
    <property type="nucleotide sequence ID" value="NC_006905.1"/>
</dbReference>
<dbReference type="SMR" id="Q57I91"/>
<dbReference type="GeneID" id="98390719"/>
<dbReference type="KEGG" id="sec:SCH_3665"/>
<dbReference type="HOGENOM" id="CLU_125406_5_3_6"/>
<dbReference type="Proteomes" id="UP000000538">
    <property type="component" value="Chromosome"/>
</dbReference>
<dbReference type="GO" id="GO:0000428">
    <property type="term" value="C:DNA-directed RNA polymerase complex"/>
    <property type="evidence" value="ECO:0007669"/>
    <property type="project" value="UniProtKB-KW"/>
</dbReference>
<dbReference type="GO" id="GO:0003677">
    <property type="term" value="F:DNA binding"/>
    <property type="evidence" value="ECO:0007669"/>
    <property type="project" value="UniProtKB-UniRule"/>
</dbReference>
<dbReference type="GO" id="GO:0003899">
    <property type="term" value="F:DNA-directed RNA polymerase activity"/>
    <property type="evidence" value="ECO:0007669"/>
    <property type="project" value="UniProtKB-UniRule"/>
</dbReference>
<dbReference type="GO" id="GO:0006351">
    <property type="term" value="P:DNA-templated transcription"/>
    <property type="evidence" value="ECO:0007669"/>
    <property type="project" value="UniProtKB-UniRule"/>
</dbReference>
<dbReference type="FunFam" id="3.90.940.10:FF:000001">
    <property type="entry name" value="DNA-directed RNA polymerase subunit omega"/>
    <property type="match status" value="1"/>
</dbReference>
<dbReference type="Gene3D" id="3.90.940.10">
    <property type="match status" value="1"/>
</dbReference>
<dbReference type="HAMAP" id="MF_00366">
    <property type="entry name" value="RNApol_bact_RpoZ"/>
    <property type="match status" value="1"/>
</dbReference>
<dbReference type="InterPro" id="IPR003716">
    <property type="entry name" value="DNA-dir_RNA_pol_omega"/>
</dbReference>
<dbReference type="InterPro" id="IPR006110">
    <property type="entry name" value="Pol_omega/Rpo6/RPB6"/>
</dbReference>
<dbReference type="InterPro" id="IPR036161">
    <property type="entry name" value="RPB6/omega-like_sf"/>
</dbReference>
<dbReference type="NCBIfam" id="TIGR00690">
    <property type="entry name" value="rpoZ"/>
    <property type="match status" value="1"/>
</dbReference>
<dbReference type="PANTHER" id="PTHR34476">
    <property type="entry name" value="DNA-DIRECTED RNA POLYMERASE SUBUNIT OMEGA"/>
    <property type="match status" value="1"/>
</dbReference>
<dbReference type="PANTHER" id="PTHR34476:SF1">
    <property type="entry name" value="DNA-DIRECTED RNA POLYMERASE SUBUNIT OMEGA"/>
    <property type="match status" value="1"/>
</dbReference>
<dbReference type="Pfam" id="PF01192">
    <property type="entry name" value="RNA_pol_Rpb6"/>
    <property type="match status" value="1"/>
</dbReference>
<dbReference type="SMART" id="SM01409">
    <property type="entry name" value="RNA_pol_Rpb6"/>
    <property type="match status" value="1"/>
</dbReference>
<dbReference type="SUPFAM" id="SSF63562">
    <property type="entry name" value="RPB6/omega subunit-like"/>
    <property type="match status" value="1"/>
</dbReference>
<sequence length="91" mass="10237">MARVTVQDAVEKIGNRFDLVLVAARRARQMQVGGKDPLVPEENDKTTVIALREIEEGLINNQILDVRERQEQQEQEAAELQAVTAIAEGRR</sequence>
<name>RPOZ_SALCH</name>